<gene>
    <name type="primary">GNP1</name>
    <name type="ordered locus">YDR508C</name>
    <name type="ORF">D9719.14</name>
</gene>
<proteinExistence type="evidence at protein level"/>
<organism>
    <name type="scientific">Saccharomyces cerevisiae (strain ATCC 204508 / S288c)</name>
    <name type="common">Baker's yeast</name>
    <dbReference type="NCBI Taxonomy" id="559292"/>
    <lineage>
        <taxon>Eukaryota</taxon>
        <taxon>Fungi</taxon>
        <taxon>Dikarya</taxon>
        <taxon>Ascomycota</taxon>
        <taxon>Saccharomycotina</taxon>
        <taxon>Saccharomycetes</taxon>
        <taxon>Saccharomycetales</taxon>
        <taxon>Saccharomycetaceae</taxon>
        <taxon>Saccharomyces</taxon>
    </lineage>
</organism>
<reference key="1">
    <citation type="journal article" date="1996" name="Curr. Genet.">
        <title>GNP1, the high-affinity glutamine permease of S. cerevisiae.</title>
        <authorList>
            <person name="Zhu X."/>
            <person name="Garrett J."/>
            <person name="Schreve J."/>
            <person name="Michaeli T."/>
        </authorList>
    </citation>
    <scope>NUCLEOTIDE SEQUENCE [GENOMIC DNA]</scope>
    <scope>FUNCTION</scope>
    <source>
        <strain>S15-4C</strain>
    </source>
</reference>
<reference key="2">
    <citation type="journal article" date="1997" name="Nature">
        <title>The nucleotide sequence of Saccharomyces cerevisiae chromosome IV.</title>
        <authorList>
            <person name="Jacq C."/>
            <person name="Alt-Moerbe J."/>
            <person name="Andre B."/>
            <person name="Arnold W."/>
            <person name="Bahr A."/>
            <person name="Ballesta J.P.G."/>
            <person name="Bargues M."/>
            <person name="Baron L."/>
            <person name="Becker A."/>
            <person name="Biteau N."/>
            <person name="Bloecker H."/>
            <person name="Blugeon C."/>
            <person name="Boskovic J."/>
            <person name="Brandt P."/>
            <person name="Brueckner M."/>
            <person name="Buitrago M.J."/>
            <person name="Coster F."/>
            <person name="Delaveau T."/>
            <person name="del Rey F."/>
            <person name="Dujon B."/>
            <person name="Eide L.G."/>
            <person name="Garcia-Cantalejo J.M."/>
            <person name="Goffeau A."/>
            <person name="Gomez-Peris A."/>
            <person name="Granotier C."/>
            <person name="Hanemann V."/>
            <person name="Hankeln T."/>
            <person name="Hoheisel J.D."/>
            <person name="Jaeger W."/>
            <person name="Jimenez A."/>
            <person name="Jonniaux J.-L."/>
            <person name="Kraemer C."/>
            <person name="Kuester H."/>
            <person name="Laamanen P."/>
            <person name="Legros Y."/>
            <person name="Louis E.J."/>
            <person name="Moeller-Rieker S."/>
            <person name="Monnet A."/>
            <person name="Moro M."/>
            <person name="Mueller-Auer S."/>
            <person name="Nussbaumer B."/>
            <person name="Paricio N."/>
            <person name="Paulin L."/>
            <person name="Perea J."/>
            <person name="Perez-Alonso M."/>
            <person name="Perez-Ortin J.E."/>
            <person name="Pohl T.M."/>
            <person name="Prydz H."/>
            <person name="Purnelle B."/>
            <person name="Rasmussen S.W."/>
            <person name="Remacha M.A."/>
            <person name="Revuelta J.L."/>
            <person name="Rieger M."/>
            <person name="Salom D."/>
            <person name="Saluz H.P."/>
            <person name="Saiz J.E."/>
            <person name="Saren A.-M."/>
            <person name="Schaefer M."/>
            <person name="Scharfe M."/>
            <person name="Schmidt E.R."/>
            <person name="Schneider C."/>
            <person name="Scholler P."/>
            <person name="Schwarz S."/>
            <person name="Soler-Mira A."/>
            <person name="Urrestarazu L.A."/>
            <person name="Verhasselt P."/>
            <person name="Vissers S."/>
            <person name="Voet M."/>
            <person name="Volckaert G."/>
            <person name="Wagner G."/>
            <person name="Wambutt R."/>
            <person name="Wedler E."/>
            <person name="Wedler H."/>
            <person name="Woelfl S."/>
            <person name="Harris D.E."/>
            <person name="Bowman S."/>
            <person name="Brown D."/>
            <person name="Churcher C.M."/>
            <person name="Connor R."/>
            <person name="Dedman K."/>
            <person name="Gentles S."/>
            <person name="Hamlin N."/>
            <person name="Hunt S."/>
            <person name="Jones L."/>
            <person name="McDonald S."/>
            <person name="Murphy L.D."/>
            <person name="Niblett D."/>
            <person name="Odell C."/>
            <person name="Oliver K."/>
            <person name="Rajandream M.A."/>
            <person name="Richards C."/>
            <person name="Shore L."/>
            <person name="Walsh S.V."/>
            <person name="Barrell B.G."/>
            <person name="Dietrich F.S."/>
            <person name="Mulligan J.T."/>
            <person name="Allen E."/>
            <person name="Araujo R."/>
            <person name="Aviles E."/>
            <person name="Berno A."/>
            <person name="Carpenter J."/>
            <person name="Chen E."/>
            <person name="Cherry J.M."/>
            <person name="Chung E."/>
            <person name="Duncan M."/>
            <person name="Hunicke-Smith S."/>
            <person name="Hyman R.W."/>
            <person name="Komp C."/>
            <person name="Lashkari D."/>
            <person name="Lew H."/>
            <person name="Lin D."/>
            <person name="Mosedale D."/>
            <person name="Nakahara K."/>
            <person name="Namath A."/>
            <person name="Oefner P."/>
            <person name="Oh C."/>
            <person name="Petel F.X."/>
            <person name="Roberts D."/>
            <person name="Schramm S."/>
            <person name="Schroeder M."/>
            <person name="Shogren T."/>
            <person name="Shroff N."/>
            <person name="Winant A."/>
            <person name="Yelton M.A."/>
            <person name="Botstein D."/>
            <person name="Davis R.W."/>
            <person name="Johnston M."/>
            <person name="Andrews S."/>
            <person name="Brinkman R."/>
            <person name="Cooper J."/>
            <person name="Ding H."/>
            <person name="Du Z."/>
            <person name="Favello A."/>
            <person name="Fulton L."/>
            <person name="Gattung S."/>
            <person name="Greco T."/>
            <person name="Hallsworth K."/>
            <person name="Hawkins J."/>
            <person name="Hillier L.W."/>
            <person name="Jier M."/>
            <person name="Johnson D."/>
            <person name="Johnston L."/>
            <person name="Kirsten J."/>
            <person name="Kucaba T."/>
            <person name="Langston Y."/>
            <person name="Latreille P."/>
            <person name="Le T."/>
            <person name="Mardis E."/>
            <person name="Menezes S."/>
            <person name="Miller N."/>
            <person name="Nhan M."/>
            <person name="Pauley A."/>
            <person name="Peluso D."/>
            <person name="Rifkin L."/>
            <person name="Riles L."/>
            <person name="Taich A."/>
            <person name="Trevaskis E."/>
            <person name="Vignati D."/>
            <person name="Wilcox L."/>
            <person name="Wohldman P."/>
            <person name="Vaudin M."/>
            <person name="Wilson R."/>
            <person name="Waterston R."/>
            <person name="Albermann K."/>
            <person name="Hani J."/>
            <person name="Heumann K."/>
            <person name="Kleine K."/>
            <person name="Mewes H.-W."/>
            <person name="Zollner A."/>
            <person name="Zaccaria P."/>
        </authorList>
    </citation>
    <scope>NUCLEOTIDE SEQUENCE [LARGE SCALE GENOMIC DNA]</scope>
    <source>
        <strain>ATCC 204508 / S288c</strain>
    </source>
</reference>
<reference key="3">
    <citation type="journal article" date="2014" name="G3 (Bethesda)">
        <title>The reference genome sequence of Saccharomyces cerevisiae: Then and now.</title>
        <authorList>
            <person name="Engel S.R."/>
            <person name="Dietrich F.S."/>
            <person name="Fisk D.G."/>
            <person name="Binkley G."/>
            <person name="Balakrishnan R."/>
            <person name="Costanzo M.C."/>
            <person name="Dwight S.S."/>
            <person name="Hitz B.C."/>
            <person name="Karra K."/>
            <person name="Nash R.S."/>
            <person name="Weng S."/>
            <person name="Wong E.D."/>
            <person name="Lloyd P."/>
            <person name="Skrzypek M.S."/>
            <person name="Miyasato S.R."/>
            <person name="Simison M."/>
            <person name="Cherry J.M."/>
        </authorList>
    </citation>
    <scope>GENOME REANNOTATION</scope>
    <source>
        <strain>ATCC 204508 / S288c</strain>
    </source>
</reference>
<reference key="4">
    <citation type="journal article" date="1999" name="Curr. Genet.">
        <title>Cysteine uptake by Saccharomyces cerevisiae is accomplished by multiple permeases.</title>
        <authorList>
            <person name="During-Olsen L."/>
            <person name="Regenberg B."/>
            <person name="Gjermansen C."/>
            <person name="Kielland-Brandt M.C."/>
            <person name="Hansen J."/>
        </authorList>
    </citation>
    <scope>FUNCTION IN L-CYSTEINE UPTAKE</scope>
</reference>
<reference key="5">
    <citation type="journal article" date="1999" name="Curr. Genet.">
        <title>Substrate specificity and gene expression of the amino-acid permeases in Saccharomyces cerevisiae.</title>
        <authorList>
            <person name="Regenberg B."/>
            <person name="During-Olsen L."/>
            <person name="Kielland-Brandt M.C."/>
            <person name="Holmberg S."/>
        </authorList>
    </citation>
    <scope>FUNCTION</scope>
</reference>
<reference key="6">
    <citation type="journal article" date="2003" name="Nature">
        <title>Global analysis of protein expression in yeast.</title>
        <authorList>
            <person name="Ghaemmaghami S."/>
            <person name="Huh W.-K."/>
            <person name="Bower K."/>
            <person name="Howson R.W."/>
            <person name="Belle A."/>
            <person name="Dephoure N."/>
            <person name="O'Shea E.K."/>
            <person name="Weissman J.S."/>
        </authorList>
    </citation>
    <scope>LEVEL OF PROTEIN EXPRESSION [LARGE SCALE ANALYSIS]</scope>
</reference>
<reference key="7">
    <citation type="journal article" date="2003" name="Nat. Biotechnol.">
        <title>A proteomics approach to understanding protein ubiquitination.</title>
        <authorList>
            <person name="Peng J."/>
            <person name="Schwartz D."/>
            <person name="Elias J.E."/>
            <person name="Thoreen C.C."/>
            <person name="Cheng D."/>
            <person name="Marsischky G."/>
            <person name="Roelofs J."/>
            <person name="Finley D."/>
            <person name="Gygi S.P."/>
        </authorList>
    </citation>
    <scope>UBIQUITINATION [LARGE SCALE ANALYSIS] AT LYS-34; LYS-41 AND LYS-132</scope>
    <scope>IDENTIFICATION BY MASS SPECTROMETRY</scope>
    <source>
        <strain>SUB592</strain>
    </source>
</reference>
<reference key="8">
    <citation type="journal article" date="2003" name="Proc. Natl. Acad. Sci. U.S.A.">
        <title>The proteome of Saccharomyces cerevisiae mitochondria.</title>
        <authorList>
            <person name="Sickmann A."/>
            <person name="Reinders J."/>
            <person name="Wagner Y."/>
            <person name="Joppich C."/>
            <person name="Zahedi R.P."/>
            <person name="Meyer H.E."/>
            <person name="Schoenfisch B."/>
            <person name="Perschil I."/>
            <person name="Chacinska A."/>
            <person name="Guiard B."/>
            <person name="Rehling P."/>
            <person name="Pfanner N."/>
            <person name="Meisinger C."/>
        </authorList>
    </citation>
    <scope>SUBCELLULAR LOCATION [LARGE SCALE ANALYSIS]</scope>
    <source>
        <strain>ATCC 76625 / YPH499</strain>
    </source>
</reference>
<reference key="9">
    <citation type="journal article" date="2006" name="Proc. Natl. Acad. Sci. U.S.A.">
        <title>A global topology map of the Saccharomyces cerevisiae membrane proteome.</title>
        <authorList>
            <person name="Kim H."/>
            <person name="Melen K."/>
            <person name="Oesterberg M."/>
            <person name="von Heijne G."/>
        </authorList>
    </citation>
    <scope>TOPOLOGY [LARGE SCALE ANALYSIS]</scope>
    <source>
        <strain>ATCC 208353 / W303-1A</strain>
    </source>
</reference>
<reference key="10">
    <citation type="journal article" date="2007" name="J. Proteome Res.">
        <title>Large-scale phosphorylation analysis of alpha-factor-arrested Saccharomyces cerevisiae.</title>
        <authorList>
            <person name="Li X."/>
            <person name="Gerber S.A."/>
            <person name="Rudner A.D."/>
            <person name="Beausoleil S.A."/>
            <person name="Haas W."/>
            <person name="Villen J."/>
            <person name="Elias J.E."/>
            <person name="Gygi S.P."/>
        </authorList>
    </citation>
    <scope>PHOSPHORYLATION [LARGE SCALE ANALYSIS] AT SER-124 AND THR-127</scope>
    <scope>IDENTIFICATION BY MASS SPECTROMETRY [LARGE SCALE ANALYSIS]</scope>
    <source>
        <strain>ADR376</strain>
    </source>
</reference>
<reference key="11">
    <citation type="journal article" date="2008" name="Mol. Cell. Proteomics">
        <title>A multidimensional chromatography technology for in-depth phosphoproteome analysis.</title>
        <authorList>
            <person name="Albuquerque C.P."/>
            <person name="Smolka M.B."/>
            <person name="Payne S.H."/>
            <person name="Bafna V."/>
            <person name="Eng J."/>
            <person name="Zhou H."/>
        </authorList>
    </citation>
    <scope>PHOSPHORYLATION [LARGE SCALE ANALYSIS] AT THR-127</scope>
    <scope>IDENTIFICATION BY MASS SPECTROMETRY [LARGE SCALE ANALYSIS]</scope>
</reference>
<reference key="12">
    <citation type="journal article" date="2009" name="Science">
        <title>Global analysis of Cdk1 substrate phosphorylation sites provides insights into evolution.</title>
        <authorList>
            <person name="Holt L.J."/>
            <person name="Tuch B.B."/>
            <person name="Villen J."/>
            <person name="Johnson A.D."/>
            <person name="Gygi S.P."/>
            <person name="Morgan D.O."/>
        </authorList>
    </citation>
    <scope>PHOSPHORYLATION [LARGE SCALE ANALYSIS] AT SER-29; SER-113; SER-124 AND THR-127</scope>
    <scope>IDENTIFICATION BY MASS SPECTROMETRY [LARGE SCALE ANALYSIS]</scope>
</reference>
<reference key="13">
    <citation type="journal article" date="2012" name="Proteomics">
        <title>Sites of ubiquitin attachment in Saccharomyces cerevisiae.</title>
        <authorList>
            <person name="Starita L.M."/>
            <person name="Lo R.S."/>
            <person name="Eng J.K."/>
            <person name="von Haller P.D."/>
            <person name="Fields S."/>
        </authorList>
    </citation>
    <scope>UBIQUITINATION [LARGE SCALE ANALYSIS] AT LYS-34; LYS-39; LYS-41 AND LYS-61</scope>
    <scope>IDENTIFICATION BY MASS SPECTROMETRY [LARGE SCALE ANALYSIS]</scope>
</reference>
<accession>P48813</accession>
<accession>D6VTD0</accession>
<comment type="function">
    <text evidence="3 4 8">High affinity transport of glutamine. Also transports Leu, Ser, Thr, Cys, Met and Asn.</text>
</comment>
<comment type="interaction">
    <interactant intactId="EBI-7758">
        <id>P48813</id>
    </interactant>
    <interactant intactId="EBI-17099">
        <id>Q02774</id>
        <label>SHR3</label>
    </interactant>
    <organismsDiffer>false</organismsDiffer>
    <experiments>3</experiments>
</comment>
<comment type="subcellular location">
    <subcellularLocation>
        <location evidence="7">Mitochondrion membrane</location>
        <topology evidence="7">Multi-pass membrane protein</topology>
    </subcellularLocation>
</comment>
<comment type="miscellaneous">
    <text evidence="6">Present with 10600 molecules/cell in log phase SD medium.</text>
</comment>
<comment type="similarity">
    <text evidence="9">Belongs to the amino acid-polyamine-organocation (APC) superfamily. YAT (TC 2.A.3.10) family.</text>
</comment>
<protein>
    <recommendedName>
        <fullName>High-affinity glutamine permease</fullName>
    </recommendedName>
</protein>
<evidence type="ECO:0000255" key="1"/>
<evidence type="ECO:0000256" key="2">
    <source>
        <dbReference type="SAM" id="MobiDB-lite"/>
    </source>
</evidence>
<evidence type="ECO:0000269" key="3">
    <source>
    </source>
</evidence>
<evidence type="ECO:0000269" key="4">
    <source>
    </source>
</evidence>
<evidence type="ECO:0000269" key="5">
    <source>
    </source>
</evidence>
<evidence type="ECO:0000269" key="6">
    <source>
    </source>
</evidence>
<evidence type="ECO:0000269" key="7">
    <source>
    </source>
</evidence>
<evidence type="ECO:0000269" key="8">
    <source>
    </source>
</evidence>
<evidence type="ECO:0000305" key="9"/>
<evidence type="ECO:0007744" key="10">
    <source>
    </source>
</evidence>
<evidence type="ECO:0007744" key="11">
    <source>
    </source>
</evidence>
<evidence type="ECO:0007744" key="12">
    <source>
    </source>
</evidence>
<evidence type="ECO:0007744" key="13">
    <source>
    </source>
</evidence>
<keyword id="KW-0029">Amino-acid transport</keyword>
<keyword id="KW-1017">Isopeptide bond</keyword>
<keyword id="KW-0472">Membrane</keyword>
<keyword id="KW-0496">Mitochondrion</keyword>
<keyword id="KW-0597">Phosphoprotein</keyword>
<keyword id="KW-1185">Reference proteome</keyword>
<keyword id="KW-0812">Transmembrane</keyword>
<keyword id="KW-1133">Transmembrane helix</keyword>
<keyword id="KW-0813">Transport</keyword>
<keyword id="KW-0832">Ubl conjugation</keyword>
<dbReference type="EMBL" id="U21643">
    <property type="protein sequence ID" value="AAB48002.1"/>
    <property type="molecule type" value="Genomic_DNA"/>
</dbReference>
<dbReference type="EMBL" id="U33057">
    <property type="protein sequence ID" value="AAB64950.1"/>
    <property type="molecule type" value="Genomic_DNA"/>
</dbReference>
<dbReference type="EMBL" id="BK006938">
    <property type="protein sequence ID" value="DAA12340.1"/>
    <property type="molecule type" value="Genomic_DNA"/>
</dbReference>
<dbReference type="PIR" id="S69566">
    <property type="entry name" value="S69566"/>
</dbReference>
<dbReference type="RefSeq" id="NP_010796.1">
    <property type="nucleotide sequence ID" value="NM_001180816.1"/>
</dbReference>
<dbReference type="SMR" id="P48813"/>
<dbReference type="BioGRID" id="32560">
    <property type="interactions" value="248"/>
</dbReference>
<dbReference type="DIP" id="DIP-1616N"/>
<dbReference type="FunCoup" id="P48813">
    <property type="interactions" value="261"/>
</dbReference>
<dbReference type="IntAct" id="P48813">
    <property type="interactions" value="23"/>
</dbReference>
<dbReference type="MINT" id="P48813"/>
<dbReference type="STRING" id="4932.YDR508C"/>
<dbReference type="TCDB" id="2.A.3.10.5">
    <property type="family name" value="the amino acid-polyamine-organocation (apc) family"/>
</dbReference>
<dbReference type="iPTMnet" id="P48813"/>
<dbReference type="SwissPalm" id="P48813"/>
<dbReference type="PaxDb" id="4932-YDR508C"/>
<dbReference type="PeptideAtlas" id="P48813"/>
<dbReference type="EnsemblFungi" id="YDR508C_mRNA">
    <property type="protein sequence ID" value="YDR508C"/>
    <property type="gene ID" value="YDR508C"/>
</dbReference>
<dbReference type="GeneID" id="852121"/>
<dbReference type="KEGG" id="sce:YDR508C"/>
<dbReference type="AGR" id="SGD:S000002916"/>
<dbReference type="SGD" id="S000002916">
    <property type="gene designation" value="GNP1"/>
</dbReference>
<dbReference type="VEuPathDB" id="FungiDB:YDR508C"/>
<dbReference type="eggNOG" id="KOG1286">
    <property type="taxonomic scope" value="Eukaryota"/>
</dbReference>
<dbReference type="GeneTree" id="ENSGT00940000176482"/>
<dbReference type="HOGENOM" id="CLU_007946_12_0_1"/>
<dbReference type="InParanoid" id="P48813"/>
<dbReference type="OMA" id="TWNYCIQ"/>
<dbReference type="OrthoDB" id="3900342at2759"/>
<dbReference type="BioCyc" id="YEAST:G3O-30029-MONOMER"/>
<dbReference type="BioGRID-ORCS" id="852121">
    <property type="hits" value="1 hit in 10 CRISPR screens"/>
</dbReference>
<dbReference type="PRO" id="PR:P48813"/>
<dbReference type="Proteomes" id="UP000002311">
    <property type="component" value="Chromosome IV"/>
</dbReference>
<dbReference type="RNAct" id="P48813">
    <property type="molecule type" value="protein"/>
</dbReference>
<dbReference type="GO" id="GO:0071944">
    <property type="term" value="C:cell periphery"/>
    <property type="evidence" value="ECO:0007005"/>
    <property type="project" value="SGD"/>
</dbReference>
<dbReference type="GO" id="GO:0005935">
    <property type="term" value="C:cellular bud neck"/>
    <property type="evidence" value="ECO:0007005"/>
    <property type="project" value="SGD"/>
</dbReference>
<dbReference type="GO" id="GO:0005783">
    <property type="term" value="C:endoplasmic reticulum"/>
    <property type="evidence" value="ECO:0007005"/>
    <property type="project" value="SGD"/>
</dbReference>
<dbReference type="GO" id="GO:0016020">
    <property type="term" value="C:membrane"/>
    <property type="evidence" value="ECO:0000318"/>
    <property type="project" value="GO_Central"/>
</dbReference>
<dbReference type="GO" id="GO:0031966">
    <property type="term" value="C:mitochondrial membrane"/>
    <property type="evidence" value="ECO:0007669"/>
    <property type="project" value="UniProtKB-SubCell"/>
</dbReference>
<dbReference type="GO" id="GO:0005739">
    <property type="term" value="C:mitochondrion"/>
    <property type="evidence" value="ECO:0007005"/>
    <property type="project" value="SGD"/>
</dbReference>
<dbReference type="GO" id="GO:0015171">
    <property type="term" value="F:amino acid transmembrane transporter activity"/>
    <property type="evidence" value="ECO:0000314"/>
    <property type="project" value="SGD"/>
</dbReference>
<dbReference type="GO" id="GO:0015193">
    <property type="term" value="F:L-proline transmembrane transporter activity"/>
    <property type="evidence" value="ECO:0000316"/>
    <property type="project" value="SGD"/>
</dbReference>
<dbReference type="GO" id="GO:0003333">
    <property type="term" value="P:amino acid transmembrane transport"/>
    <property type="evidence" value="ECO:0000318"/>
    <property type="project" value="GO_Central"/>
</dbReference>
<dbReference type="GO" id="GO:0006865">
    <property type="term" value="P:amino acid transport"/>
    <property type="evidence" value="ECO:0000314"/>
    <property type="project" value="SGD"/>
</dbReference>
<dbReference type="GO" id="GO:0090156">
    <property type="term" value="P:intracellular sphingolipid homeostasis"/>
    <property type="evidence" value="ECO:0000315"/>
    <property type="project" value="SGD"/>
</dbReference>
<dbReference type="GO" id="GO:0098718">
    <property type="term" value="P:serine import across plasma membrane"/>
    <property type="evidence" value="ECO:0000315"/>
    <property type="project" value="SGD"/>
</dbReference>
<dbReference type="GO" id="GO:0055085">
    <property type="term" value="P:transmembrane transport"/>
    <property type="evidence" value="ECO:0000314"/>
    <property type="project" value="SGD"/>
</dbReference>
<dbReference type="FunFam" id="1.20.1740.10:FF:000017">
    <property type="entry name" value="Amino acid permease"/>
    <property type="match status" value="1"/>
</dbReference>
<dbReference type="Gene3D" id="1.20.1740.10">
    <property type="entry name" value="Amino acid/polyamine transporter I"/>
    <property type="match status" value="1"/>
</dbReference>
<dbReference type="InterPro" id="IPR004841">
    <property type="entry name" value="AA-permease/SLC12A_dom"/>
</dbReference>
<dbReference type="InterPro" id="IPR004840">
    <property type="entry name" value="Amino_acid_permease_CS"/>
</dbReference>
<dbReference type="InterPro" id="IPR004762">
    <property type="entry name" value="Amino_acid_permease_fungi"/>
</dbReference>
<dbReference type="InterPro" id="IPR050524">
    <property type="entry name" value="APC_YAT"/>
</dbReference>
<dbReference type="NCBIfam" id="TIGR00913">
    <property type="entry name" value="2A0310"/>
    <property type="match status" value="1"/>
</dbReference>
<dbReference type="PANTHER" id="PTHR43341">
    <property type="entry name" value="AMINO ACID PERMEASE"/>
    <property type="match status" value="1"/>
</dbReference>
<dbReference type="PANTHER" id="PTHR43341:SF17">
    <property type="entry name" value="GENERAL AMINO ACID PERMEASE AGP1-RELATED"/>
    <property type="match status" value="1"/>
</dbReference>
<dbReference type="Pfam" id="PF00324">
    <property type="entry name" value="AA_permease"/>
    <property type="match status" value="1"/>
</dbReference>
<dbReference type="PROSITE" id="PS00218">
    <property type="entry name" value="AMINO_ACID_PERMEASE_1"/>
    <property type="match status" value="1"/>
</dbReference>
<name>GNP1_YEAST</name>
<feature type="chain" id="PRO_0000054152" description="High-affinity glutamine permease">
    <location>
        <begin position="1"/>
        <end position="663"/>
    </location>
</feature>
<feature type="topological domain" description="Cytoplasmic" evidence="1">
    <location>
        <begin position="1"/>
        <end position="154"/>
    </location>
</feature>
<feature type="transmembrane region" description="Helical" evidence="1">
    <location>
        <begin position="155"/>
        <end position="175"/>
    </location>
</feature>
<feature type="topological domain" description="Mitochondrial intermembrane" evidence="1">
    <location>
        <begin position="176"/>
        <end position="177"/>
    </location>
</feature>
<feature type="transmembrane region" description="Helical" evidence="1">
    <location>
        <begin position="178"/>
        <end position="198"/>
    </location>
</feature>
<feature type="topological domain" description="Cytoplasmic" evidence="1">
    <location>
        <begin position="199"/>
        <end position="219"/>
    </location>
</feature>
<feature type="transmembrane region" description="Helical" evidence="1">
    <location>
        <begin position="220"/>
        <end position="240"/>
    </location>
</feature>
<feature type="topological domain" description="Mitochondrial intermembrane" evidence="1">
    <location>
        <begin position="241"/>
        <end position="264"/>
    </location>
</feature>
<feature type="transmembrane region" description="Helical" evidence="1">
    <location>
        <begin position="265"/>
        <end position="285"/>
    </location>
</feature>
<feature type="topological domain" description="Cytoplasmic" evidence="1">
    <location>
        <begin position="286"/>
        <end position="289"/>
    </location>
</feature>
<feature type="transmembrane region" description="Helical" evidence="1">
    <location>
        <begin position="290"/>
        <end position="310"/>
    </location>
</feature>
<feature type="topological domain" description="Mitochondrial intermembrane" evidence="1">
    <location>
        <begin position="311"/>
        <end position="342"/>
    </location>
</feature>
<feature type="transmembrane region" description="Helical" evidence="1">
    <location>
        <begin position="343"/>
        <end position="363"/>
    </location>
</feature>
<feature type="topological domain" description="Cytoplasmic" evidence="1">
    <location>
        <begin position="364"/>
        <end position="381"/>
    </location>
</feature>
<feature type="transmembrane region" description="Helical" evidence="1">
    <location>
        <begin position="382"/>
        <end position="402"/>
    </location>
</feature>
<feature type="topological domain" description="Mitochondrial intermembrane" evidence="1">
    <location>
        <begin position="403"/>
        <end position="432"/>
    </location>
</feature>
<feature type="transmembrane region" description="Helical" evidence="1">
    <location>
        <begin position="433"/>
        <end position="453"/>
    </location>
</feature>
<feature type="topological domain" description="Cytoplasmic" evidence="1">
    <location>
        <begin position="454"/>
        <end position="481"/>
    </location>
</feature>
<feature type="transmembrane region" description="Helical" evidence="1">
    <location>
        <begin position="482"/>
        <end position="502"/>
    </location>
</feature>
<feature type="topological domain" description="Mitochondrial intermembrane" evidence="1">
    <location>
        <begin position="503"/>
        <end position="506"/>
    </location>
</feature>
<feature type="transmembrane region" description="Helical" evidence="1">
    <location>
        <begin position="507"/>
        <end position="527"/>
    </location>
</feature>
<feature type="topological domain" description="Cytoplasmic" evidence="1">
    <location>
        <begin position="528"/>
        <end position="560"/>
    </location>
</feature>
<feature type="transmembrane region" description="Helical" evidence="1">
    <location>
        <begin position="561"/>
        <end position="581"/>
    </location>
</feature>
<feature type="topological domain" description="Mitochondrial intermembrane" evidence="1">
    <location>
        <begin position="582"/>
        <end position="590"/>
    </location>
</feature>
<feature type="transmembrane region" description="Helical" evidence="1">
    <location>
        <begin position="591"/>
        <end position="611"/>
    </location>
</feature>
<feature type="topological domain" description="Cytoplasmic" evidence="1">
    <location>
        <begin position="612"/>
        <end position="663"/>
    </location>
</feature>
<feature type="region of interest" description="Disordered" evidence="2">
    <location>
        <begin position="1"/>
        <end position="24"/>
    </location>
</feature>
<feature type="region of interest" description="Disordered" evidence="2">
    <location>
        <begin position="87"/>
        <end position="117"/>
    </location>
</feature>
<feature type="compositionally biased region" description="Polar residues" evidence="2">
    <location>
        <begin position="12"/>
        <end position="22"/>
    </location>
</feature>
<feature type="compositionally biased region" description="Polar residues" evidence="2">
    <location>
        <begin position="91"/>
        <end position="117"/>
    </location>
</feature>
<feature type="modified residue" description="Phosphoserine" evidence="12">
    <location>
        <position position="29"/>
    </location>
</feature>
<feature type="modified residue" description="Phosphoserine" evidence="12">
    <location>
        <position position="113"/>
    </location>
</feature>
<feature type="modified residue" description="Phosphoserine" evidence="10 12">
    <location>
        <position position="124"/>
    </location>
</feature>
<feature type="modified residue" description="Phosphothreonine" evidence="10 11 12">
    <location>
        <position position="127"/>
    </location>
</feature>
<feature type="cross-link" description="Glycyl lysine isopeptide (Lys-Gly) (interchain with G-Cter in ubiquitin)" evidence="13">
    <location>
        <position position="34"/>
    </location>
</feature>
<feature type="cross-link" description="Glycyl lysine isopeptide (Lys-Gly) (interchain with G-Cter in ubiquitin)" evidence="13">
    <location>
        <position position="39"/>
    </location>
</feature>
<feature type="cross-link" description="Glycyl lysine isopeptide (Lys-Gly) (interchain with G-Cter in ubiquitin)" evidence="13">
    <location>
        <position position="41"/>
    </location>
</feature>
<feature type="cross-link" description="Glycyl lysine isopeptide (Lys-Gly) (interchain with G-Cter in ubiquitin)" evidence="13">
    <location>
        <position position="61"/>
    </location>
</feature>
<feature type="cross-link" description="Glycyl lysine isopeptide (Lys-Gly) (interchain with G-Cter in ubiquitin)" evidence="5">
    <location>
        <position position="132"/>
    </location>
</feature>
<feature type="sequence conflict" description="In Ref. 1; AAB48002." evidence="9" ref="1">
    <original>G</original>
    <variation>S</variation>
    <location>
        <position position="319"/>
    </location>
</feature>
<sequence length="663" mass="73598">MTLGNRRHGRNNEGSSNMNMNRNDLDDVSHYEMKEIQPKEKQIGSIEPENEVEYFEKTVEKTIENMEYEGEHHASYLRRFIDSFRRAEGSHANSPDSSNSNGTTPISTKDSSSQLDNELNRKSSYITVDGIKQSPQEQEQKQENLKKSIKPRHTVMMSLGTGIGTGLLVGNSKVLNNAGPGGLIIGYAIMGSCVYCIIQACGELAVIYSDLIGGFNTYPLFLVDPALGFSVAWLFCLQWLCVCPLELVTASMTIKYWTTSVNPDVFVVIFYVLIVVINVFGAKGYAEADFFFNCCKILMIVGFFILAIIIDCGGAGTDGYIGSKYWRDPGAFRGDTPIQRFKGVVATFVTAAFAFGMSEQLAMTASEQSNPRKAIPSAAKKMIYRILFVFLASLTLVGFLVPYTSDQLLGAAGSATKASPYVIAVSSHGVRVVPHFINAVILLSVLSVANGAFYTSSRILMSLAKQGNAPKCFDYIDREGRPAAAMLVSALFGVIAFCASSKKEEDVFTWLLAISGLSQLFTWITICLSHIRFRRAMKVQGRSLGEVGYKSQVGVWGSAYAVLMMVLALIAQFWVAIAPIGGGGKLSAQSFFENYLAMPIWIALYIFYKVWKKDWSLFIPADKVDLVSHRNIFDEELLKQEDEEYKERLRNGPYWKRVLDFWC</sequence>